<gene>
    <name type="primary">yrpG</name>
    <name type="ordered locus">BSU26850</name>
</gene>
<protein>
    <recommendedName>
        <fullName>Uncharacterized oxidoreductase YrpG</fullName>
        <ecNumber>1.-.-.-</ecNumber>
    </recommendedName>
</protein>
<sequence length="326" mass="36630">MEYTYLGRTGLRVSRLCLGTMNFGVDTDEKTAFRIMDEALDNGIQFFDTANIYGWGKNAGLTESIIGKWFAQGGQRREKVVLATKVYEPISDPNDGPNDMRGLSLYKIRRHLEGSLKRLQTDHIELYQMHHIDRRTPWDEIWEAFETQVRSGKVDYIGSSNFAGWHLVKAQAEAEKRRFMGLVTEQHKYSLLERTAEMEVLPAARDLGLGVVAWSPLAGGLLGGKALKSNAGTRTAKRADLIEKHRLQLEKFSDLCKELGEKEANVALAWVLANPVLTAPIIGPRTVEQLRDTIKAVEISLDKEILRMLNDIFPGPGGETPEAYAW</sequence>
<dbReference type="EC" id="1.-.-.-"/>
<dbReference type="EMBL" id="U93875">
    <property type="protein sequence ID" value="AAB80886.1"/>
    <property type="status" value="ALT_INIT"/>
    <property type="molecule type" value="Genomic_DNA"/>
</dbReference>
<dbReference type="EMBL" id="AL009126">
    <property type="protein sequence ID" value="CAB14626.2"/>
    <property type="molecule type" value="Genomic_DNA"/>
</dbReference>
<dbReference type="PIR" id="F69978">
    <property type="entry name" value="F69978"/>
</dbReference>
<dbReference type="RefSeq" id="NP_390562.2">
    <property type="nucleotide sequence ID" value="NC_000964.3"/>
</dbReference>
<dbReference type="RefSeq" id="WP_004398762.1">
    <property type="nucleotide sequence ID" value="NZ_OZ025638.1"/>
</dbReference>
<dbReference type="SMR" id="O05408"/>
<dbReference type="FunCoup" id="O05408">
    <property type="interactions" value="420"/>
</dbReference>
<dbReference type="STRING" id="224308.BSU26850"/>
<dbReference type="jPOST" id="O05408"/>
<dbReference type="PaxDb" id="224308-BSU26850"/>
<dbReference type="EnsemblBacteria" id="CAB14626">
    <property type="protein sequence ID" value="CAB14626"/>
    <property type="gene ID" value="BSU_26850"/>
</dbReference>
<dbReference type="GeneID" id="937611"/>
<dbReference type="KEGG" id="bsu:BSU26850"/>
<dbReference type="PATRIC" id="fig|224308.179.peg.2917"/>
<dbReference type="eggNOG" id="COG0667">
    <property type="taxonomic scope" value="Bacteria"/>
</dbReference>
<dbReference type="InParanoid" id="O05408"/>
<dbReference type="OrthoDB" id="9773828at2"/>
<dbReference type="PhylomeDB" id="O05408"/>
<dbReference type="BioCyc" id="BSUB:BSU26850-MONOMER"/>
<dbReference type="Proteomes" id="UP000001570">
    <property type="component" value="Chromosome"/>
</dbReference>
<dbReference type="GO" id="GO:0005829">
    <property type="term" value="C:cytosol"/>
    <property type="evidence" value="ECO:0000318"/>
    <property type="project" value="GO_Central"/>
</dbReference>
<dbReference type="GO" id="GO:0016491">
    <property type="term" value="F:oxidoreductase activity"/>
    <property type="evidence" value="ECO:0007669"/>
    <property type="project" value="UniProtKB-KW"/>
</dbReference>
<dbReference type="CDD" id="cd19087">
    <property type="entry name" value="AKR_AKR12A1_B1_C1"/>
    <property type="match status" value="1"/>
</dbReference>
<dbReference type="FunFam" id="3.20.20.100:FF:000004">
    <property type="entry name" value="Oxidoreductase, aldo/keto reductase"/>
    <property type="match status" value="1"/>
</dbReference>
<dbReference type="Gene3D" id="3.20.20.100">
    <property type="entry name" value="NADP-dependent oxidoreductase domain"/>
    <property type="match status" value="1"/>
</dbReference>
<dbReference type="InterPro" id="IPR050523">
    <property type="entry name" value="AKR_Detox_Biosynth"/>
</dbReference>
<dbReference type="InterPro" id="IPR023210">
    <property type="entry name" value="NADP_OxRdtase_dom"/>
</dbReference>
<dbReference type="InterPro" id="IPR036812">
    <property type="entry name" value="NADP_OxRdtase_dom_sf"/>
</dbReference>
<dbReference type="PANTHER" id="PTHR43364">
    <property type="entry name" value="NADH-SPECIFIC METHYLGLYOXAL REDUCTASE-RELATED"/>
    <property type="match status" value="1"/>
</dbReference>
<dbReference type="PANTHER" id="PTHR43364:SF5">
    <property type="entry name" value="REDUCTASE"/>
    <property type="match status" value="1"/>
</dbReference>
<dbReference type="Pfam" id="PF00248">
    <property type="entry name" value="Aldo_ket_red"/>
    <property type="match status" value="1"/>
</dbReference>
<dbReference type="SUPFAM" id="SSF51430">
    <property type="entry name" value="NAD(P)-linked oxidoreductase"/>
    <property type="match status" value="1"/>
</dbReference>
<evidence type="ECO:0000250" key="1"/>
<evidence type="ECO:0000255" key="2"/>
<evidence type="ECO:0000305" key="3"/>
<proteinExistence type="inferred from homology"/>
<feature type="chain" id="PRO_0000360676" description="Uncharacterized oxidoreductase YrpG">
    <location>
        <begin position="1"/>
        <end position="326"/>
    </location>
</feature>
<feature type="coiled-coil region" evidence="2">
    <location>
        <begin position="242"/>
        <end position="305"/>
    </location>
</feature>
<feature type="active site" description="Proton donor" evidence="1">
    <location>
        <position position="53"/>
    </location>
</feature>
<feature type="binding site" evidence="1">
    <location>
        <begin position="215"/>
        <end position="225"/>
    </location>
    <ligand>
        <name>NADP(+)</name>
        <dbReference type="ChEBI" id="CHEBI:58349"/>
    </ligand>
</feature>
<accession>O05408</accession>
<accession>Q796A0</accession>
<name>YRPG_BACSU</name>
<reference key="1">
    <citation type="journal article" date="1997" name="Microbiology">
        <title>Sequence of the Bacillus subtilis genome region in the vicinity of the lev operon reveals two new extracytoplasmic function RNA polymerase sigma factors SigV and SigZ.</title>
        <authorList>
            <person name="Sorokin A."/>
            <person name="Bolotin A."/>
            <person name="Purnelle B."/>
            <person name="Hilbert H."/>
            <person name="Lauber J."/>
            <person name="Duesterhoeft A."/>
            <person name="Ehrlich S.D."/>
        </authorList>
    </citation>
    <scope>NUCLEOTIDE SEQUENCE [GENOMIC DNA]</scope>
    <source>
        <strain>168</strain>
    </source>
</reference>
<reference key="2">
    <citation type="journal article" date="1997" name="Nature">
        <title>The complete genome sequence of the Gram-positive bacterium Bacillus subtilis.</title>
        <authorList>
            <person name="Kunst F."/>
            <person name="Ogasawara N."/>
            <person name="Moszer I."/>
            <person name="Albertini A.M."/>
            <person name="Alloni G."/>
            <person name="Azevedo V."/>
            <person name="Bertero M.G."/>
            <person name="Bessieres P."/>
            <person name="Bolotin A."/>
            <person name="Borchert S."/>
            <person name="Borriss R."/>
            <person name="Boursier L."/>
            <person name="Brans A."/>
            <person name="Braun M."/>
            <person name="Brignell S.C."/>
            <person name="Bron S."/>
            <person name="Brouillet S."/>
            <person name="Bruschi C.V."/>
            <person name="Caldwell B."/>
            <person name="Capuano V."/>
            <person name="Carter N.M."/>
            <person name="Choi S.-K."/>
            <person name="Codani J.-J."/>
            <person name="Connerton I.F."/>
            <person name="Cummings N.J."/>
            <person name="Daniel R.A."/>
            <person name="Denizot F."/>
            <person name="Devine K.M."/>
            <person name="Duesterhoeft A."/>
            <person name="Ehrlich S.D."/>
            <person name="Emmerson P.T."/>
            <person name="Entian K.-D."/>
            <person name="Errington J."/>
            <person name="Fabret C."/>
            <person name="Ferrari E."/>
            <person name="Foulger D."/>
            <person name="Fritz C."/>
            <person name="Fujita M."/>
            <person name="Fujita Y."/>
            <person name="Fuma S."/>
            <person name="Galizzi A."/>
            <person name="Galleron N."/>
            <person name="Ghim S.-Y."/>
            <person name="Glaser P."/>
            <person name="Goffeau A."/>
            <person name="Golightly E.J."/>
            <person name="Grandi G."/>
            <person name="Guiseppi G."/>
            <person name="Guy B.J."/>
            <person name="Haga K."/>
            <person name="Haiech J."/>
            <person name="Harwood C.R."/>
            <person name="Henaut A."/>
            <person name="Hilbert H."/>
            <person name="Holsappel S."/>
            <person name="Hosono S."/>
            <person name="Hullo M.-F."/>
            <person name="Itaya M."/>
            <person name="Jones L.-M."/>
            <person name="Joris B."/>
            <person name="Karamata D."/>
            <person name="Kasahara Y."/>
            <person name="Klaerr-Blanchard M."/>
            <person name="Klein C."/>
            <person name="Kobayashi Y."/>
            <person name="Koetter P."/>
            <person name="Koningstein G."/>
            <person name="Krogh S."/>
            <person name="Kumano M."/>
            <person name="Kurita K."/>
            <person name="Lapidus A."/>
            <person name="Lardinois S."/>
            <person name="Lauber J."/>
            <person name="Lazarevic V."/>
            <person name="Lee S.-M."/>
            <person name="Levine A."/>
            <person name="Liu H."/>
            <person name="Masuda S."/>
            <person name="Mauel C."/>
            <person name="Medigue C."/>
            <person name="Medina N."/>
            <person name="Mellado R.P."/>
            <person name="Mizuno M."/>
            <person name="Moestl D."/>
            <person name="Nakai S."/>
            <person name="Noback M."/>
            <person name="Noone D."/>
            <person name="O'Reilly M."/>
            <person name="Ogawa K."/>
            <person name="Ogiwara A."/>
            <person name="Oudega B."/>
            <person name="Park S.-H."/>
            <person name="Parro V."/>
            <person name="Pohl T.M."/>
            <person name="Portetelle D."/>
            <person name="Porwollik S."/>
            <person name="Prescott A.M."/>
            <person name="Presecan E."/>
            <person name="Pujic P."/>
            <person name="Purnelle B."/>
            <person name="Rapoport G."/>
            <person name="Rey M."/>
            <person name="Reynolds S."/>
            <person name="Rieger M."/>
            <person name="Rivolta C."/>
            <person name="Rocha E."/>
            <person name="Roche B."/>
            <person name="Rose M."/>
            <person name="Sadaie Y."/>
            <person name="Sato T."/>
            <person name="Scanlan E."/>
            <person name="Schleich S."/>
            <person name="Schroeter R."/>
            <person name="Scoffone F."/>
            <person name="Sekiguchi J."/>
            <person name="Sekowska A."/>
            <person name="Seror S.J."/>
            <person name="Serror P."/>
            <person name="Shin B.-S."/>
            <person name="Soldo B."/>
            <person name="Sorokin A."/>
            <person name="Tacconi E."/>
            <person name="Takagi T."/>
            <person name="Takahashi H."/>
            <person name="Takemaru K."/>
            <person name="Takeuchi M."/>
            <person name="Tamakoshi A."/>
            <person name="Tanaka T."/>
            <person name="Terpstra P."/>
            <person name="Tognoni A."/>
            <person name="Tosato V."/>
            <person name="Uchiyama S."/>
            <person name="Vandenbol M."/>
            <person name="Vannier F."/>
            <person name="Vassarotti A."/>
            <person name="Viari A."/>
            <person name="Wambutt R."/>
            <person name="Wedler E."/>
            <person name="Wedler H."/>
            <person name="Weitzenegger T."/>
            <person name="Winters P."/>
            <person name="Wipat A."/>
            <person name="Yamamoto H."/>
            <person name="Yamane K."/>
            <person name="Yasumoto K."/>
            <person name="Yata K."/>
            <person name="Yoshida K."/>
            <person name="Yoshikawa H.-F."/>
            <person name="Zumstein E."/>
            <person name="Yoshikawa H."/>
            <person name="Danchin A."/>
        </authorList>
    </citation>
    <scope>NUCLEOTIDE SEQUENCE [LARGE SCALE GENOMIC DNA]</scope>
    <source>
        <strain>168</strain>
    </source>
</reference>
<keyword id="KW-0175">Coiled coil</keyword>
<keyword id="KW-0521">NADP</keyword>
<keyword id="KW-0560">Oxidoreductase</keyword>
<keyword id="KW-1185">Reference proteome</keyword>
<organism>
    <name type="scientific">Bacillus subtilis (strain 168)</name>
    <dbReference type="NCBI Taxonomy" id="224308"/>
    <lineage>
        <taxon>Bacteria</taxon>
        <taxon>Bacillati</taxon>
        <taxon>Bacillota</taxon>
        <taxon>Bacilli</taxon>
        <taxon>Bacillales</taxon>
        <taxon>Bacillaceae</taxon>
        <taxon>Bacillus</taxon>
    </lineage>
</organism>
<comment type="similarity">
    <text evidence="3">Belongs to the aldo/keto reductase family. Aldo/keto reductase 2 subfamily.</text>
</comment>
<comment type="sequence caution" evidence="3">
    <conflict type="erroneous initiation">
        <sequence resource="EMBL-CDS" id="AAB80886"/>
    </conflict>
</comment>